<proteinExistence type="inferred from homology"/>
<sequence>MTTLADLRINYSRASLDEADAAPDPFAQFDRWFNEALAAKLPEPNTMTLATVGADGRPSARIVLVKGVDERGFVFFTNYESRKGRDLAAHPYAALLFYWIELERQVRIEGRVEKTSAEESDRYFASRPVGSRIGAWASEQSTVIDSRATLEAREKAFSERYGDDPPRPPHWGGYRVVPDTLEFWQGRPSRLHDRLVYTRDAAAPHGWTISRLSP</sequence>
<comment type="function">
    <text evidence="1">Catalyzes the oxidation of either pyridoxine 5'-phosphate (PNP) or pyridoxamine 5'-phosphate (PMP) into pyridoxal 5'-phosphate (PLP).</text>
</comment>
<comment type="catalytic activity">
    <reaction evidence="1">
        <text>pyridoxamine 5'-phosphate + O2 + H2O = pyridoxal 5'-phosphate + H2O2 + NH4(+)</text>
        <dbReference type="Rhea" id="RHEA:15817"/>
        <dbReference type="ChEBI" id="CHEBI:15377"/>
        <dbReference type="ChEBI" id="CHEBI:15379"/>
        <dbReference type="ChEBI" id="CHEBI:16240"/>
        <dbReference type="ChEBI" id="CHEBI:28938"/>
        <dbReference type="ChEBI" id="CHEBI:58451"/>
        <dbReference type="ChEBI" id="CHEBI:597326"/>
        <dbReference type="EC" id="1.4.3.5"/>
    </reaction>
</comment>
<comment type="catalytic activity">
    <reaction evidence="1">
        <text>pyridoxine 5'-phosphate + O2 = pyridoxal 5'-phosphate + H2O2</text>
        <dbReference type="Rhea" id="RHEA:15149"/>
        <dbReference type="ChEBI" id="CHEBI:15379"/>
        <dbReference type="ChEBI" id="CHEBI:16240"/>
        <dbReference type="ChEBI" id="CHEBI:58589"/>
        <dbReference type="ChEBI" id="CHEBI:597326"/>
        <dbReference type="EC" id="1.4.3.5"/>
    </reaction>
</comment>
<comment type="cofactor">
    <cofactor evidence="1">
        <name>FMN</name>
        <dbReference type="ChEBI" id="CHEBI:58210"/>
    </cofactor>
    <text evidence="1">Binds 1 FMN per subunit.</text>
</comment>
<comment type="pathway">
    <text evidence="1">Cofactor metabolism; pyridoxal 5'-phosphate salvage; pyridoxal 5'-phosphate from pyridoxamine 5'-phosphate: step 1/1.</text>
</comment>
<comment type="pathway">
    <text evidence="1">Cofactor metabolism; pyridoxal 5'-phosphate salvage; pyridoxal 5'-phosphate from pyridoxine 5'-phosphate: step 1/1.</text>
</comment>
<comment type="subunit">
    <text evidence="1">Homodimer.</text>
</comment>
<comment type="similarity">
    <text evidence="1">Belongs to the pyridoxamine 5'-phosphate oxidase family.</text>
</comment>
<accession>A9AGI1</accession>
<keyword id="KW-0285">Flavoprotein</keyword>
<keyword id="KW-0288">FMN</keyword>
<keyword id="KW-0560">Oxidoreductase</keyword>
<keyword id="KW-0664">Pyridoxine biosynthesis</keyword>
<keyword id="KW-1185">Reference proteome</keyword>
<evidence type="ECO:0000255" key="1">
    <source>
        <dbReference type="HAMAP-Rule" id="MF_01629"/>
    </source>
</evidence>
<name>PDXH_BURM1</name>
<feature type="chain" id="PRO_1000186295" description="Pyridoxine/pyridoxamine 5'-phosphate oxidase">
    <location>
        <begin position="1"/>
        <end position="214"/>
    </location>
</feature>
<feature type="binding site" evidence="1">
    <location>
        <begin position="8"/>
        <end position="11"/>
    </location>
    <ligand>
        <name>substrate</name>
    </ligand>
</feature>
<feature type="binding site" evidence="1">
    <location>
        <begin position="61"/>
        <end position="66"/>
    </location>
    <ligand>
        <name>FMN</name>
        <dbReference type="ChEBI" id="CHEBI:58210"/>
    </ligand>
</feature>
<feature type="binding site" evidence="1">
    <location>
        <position position="66"/>
    </location>
    <ligand>
        <name>substrate</name>
    </ligand>
</feature>
<feature type="binding site" evidence="1">
    <location>
        <begin position="76"/>
        <end position="77"/>
    </location>
    <ligand>
        <name>FMN</name>
        <dbReference type="ChEBI" id="CHEBI:58210"/>
    </ligand>
</feature>
<feature type="binding site" evidence="1">
    <location>
        <position position="82"/>
    </location>
    <ligand>
        <name>FMN</name>
        <dbReference type="ChEBI" id="CHEBI:58210"/>
    </ligand>
</feature>
<feature type="binding site" evidence="1">
    <location>
        <position position="83"/>
    </location>
    <ligand>
        <name>FMN</name>
        <dbReference type="ChEBI" id="CHEBI:58210"/>
    </ligand>
</feature>
<feature type="binding site" evidence="1">
    <location>
        <position position="105"/>
    </location>
    <ligand>
        <name>FMN</name>
        <dbReference type="ChEBI" id="CHEBI:58210"/>
    </ligand>
</feature>
<feature type="binding site" evidence="1">
    <location>
        <position position="123"/>
    </location>
    <ligand>
        <name>substrate</name>
    </ligand>
</feature>
<feature type="binding site" evidence="1">
    <location>
        <position position="127"/>
    </location>
    <ligand>
        <name>substrate</name>
    </ligand>
</feature>
<feature type="binding site" evidence="1">
    <location>
        <position position="131"/>
    </location>
    <ligand>
        <name>substrate</name>
    </ligand>
</feature>
<feature type="binding site" evidence="1">
    <location>
        <begin position="140"/>
        <end position="141"/>
    </location>
    <ligand>
        <name>FMN</name>
        <dbReference type="ChEBI" id="CHEBI:58210"/>
    </ligand>
</feature>
<feature type="binding site" evidence="1">
    <location>
        <position position="184"/>
    </location>
    <ligand>
        <name>FMN</name>
        <dbReference type="ChEBI" id="CHEBI:58210"/>
    </ligand>
</feature>
<feature type="binding site" evidence="1">
    <location>
        <begin position="190"/>
        <end position="192"/>
    </location>
    <ligand>
        <name>substrate</name>
    </ligand>
</feature>
<feature type="binding site" evidence="1">
    <location>
        <position position="194"/>
    </location>
    <ligand>
        <name>FMN</name>
        <dbReference type="ChEBI" id="CHEBI:58210"/>
    </ligand>
</feature>
<organism>
    <name type="scientific">Burkholderia multivorans (strain ATCC 17616 / 249)</name>
    <dbReference type="NCBI Taxonomy" id="395019"/>
    <lineage>
        <taxon>Bacteria</taxon>
        <taxon>Pseudomonadati</taxon>
        <taxon>Pseudomonadota</taxon>
        <taxon>Betaproteobacteria</taxon>
        <taxon>Burkholderiales</taxon>
        <taxon>Burkholderiaceae</taxon>
        <taxon>Burkholderia</taxon>
        <taxon>Burkholderia cepacia complex</taxon>
    </lineage>
</organism>
<gene>
    <name evidence="1" type="primary">pdxH</name>
    <name type="ordered locus">Bmul_0728</name>
    <name type="ordered locus">BMULJ_02532</name>
</gene>
<reference key="1">
    <citation type="submission" date="2007-10" db="EMBL/GenBank/DDBJ databases">
        <title>Complete sequence of chromosome 1 of Burkholderia multivorans ATCC 17616.</title>
        <authorList>
            <person name="Copeland A."/>
            <person name="Lucas S."/>
            <person name="Lapidus A."/>
            <person name="Barry K."/>
            <person name="Glavina del Rio T."/>
            <person name="Dalin E."/>
            <person name="Tice H."/>
            <person name="Pitluck S."/>
            <person name="Chain P."/>
            <person name="Malfatti S."/>
            <person name="Shin M."/>
            <person name="Vergez L."/>
            <person name="Schmutz J."/>
            <person name="Larimer F."/>
            <person name="Land M."/>
            <person name="Hauser L."/>
            <person name="Kyrpides N."/>
            <person name="Kim E."/>
            <person name="Tiedje J."/>
            <person name="Richardson P."/>
        </authorList>
    </citation>
    <scope>NUCLEOTIDE SEQUENCE [LARGE SCALE GENOMIC DNA]</scope>
    <source>
        <strain>ATCC 17616 / 249</strain>
    </source>
</reference>
<reference key="2">
    <citation type="submission" date="2007-04" db="EMBL/GenBank/DDBJ databases">
        <title>Complete genome sequence of Burkholderia multivorans ATCC 17616.</title>
        <authorList>
            <person name="Ohtsubo Y."/>
            <person name="Yamashita A."/>
            <person name="Kurokawa K."/>
            <person name="Takami H."/>
            <person name="Yuhara S."/>
            <person name="Nishiyama E."/>
            <person name="Endo R."/>
            <person name="Miyazaki R."/>
            <person name="Ono A."/>
            <person name="Yano K."/>
            <person name="Ito M."/>
            <person name="Sota M."/>
            <person name="Yuji N."/>
            <person name="Hattori M."/>
            <person name="Tsuda M."/>
        </authorList>
    </citation>
    <scope>NUCLEOTIDE SEQUENCE [LARGE SCALE GENOMIC DNA]</scope>
    <source>
        <strain>ATCC 17616 / 249</strain>
    </source>
</reference>
<protein>
    <recommendedName>
        <fullName evidence="1">Pyridoxine/pyridoxamine 5'-phosphate oxidase</fullName>
        <ecNumber evidence="1">1.4.3.5</ecNumber>
    </recommendedName>
    <alternativeName>
        <fullName evidence="1">PNP/PMP oxidase</fullName>
        <shortName evidence="1">PNPOx</shortName>
    </alternativeName>
    <alternativeName>
        <fullName evidence="1">Pyridoxal 5'-phosphate synthase</fullName>
    </alternativeName>
</protein>
<dbReference type="EC" id="1.4.3.5" evidence="1"/>
<dbReference type="EMBL" id="CP000868">
    <property type="protein sequence ID" value="ABX14423.1"/>
    <property type="molecule type" value="Genomic_DNA"/>
</dbReference>
<dbReference type="EMBL" id="AP009385">
    <property type="protein sequence ID" value="BAG44423.1"/>
    <property type="molecule type" value="Genomic_DNA"/>
</dbReference>
<dbReference type="RefSeq" id="WP_012212827.1">
    <property type="nucleotide sequence ID" value="NC_010084.1"/>
</dbReference>
<dbReference type="SMR" id="A9AGI1"/>
<dbReference type="STRING" id="395019.BMULJ_02532"/>
<dbReference type="KEGG" id="bmj:BMULJ_02532"/>
<dbReference type="KEGG" id="bmu:Bmul_0728"/>
<dbReference type="eggNOG" id="COG0259">
    <property type="taxonomic scope" value="Bacteria"/>
</dbReference>
<dbReference type="HOGENOM" id="CLU_032263_2_2_4"/>
<dbReference type="UniPathway" id="UPA01068">
    <property type="reaction ID" value="UER00304"/>
</dbReference>
<dbReference type="UniPathway" id="UPA01068">
    <property type="reaction ID" value="UER00305"/>
</dbReference>
<dbReference type="Proteomes" id="UP000008815">
    <property type="component" value="Chromosome 1"/>
</dbReference>
<dbReference type="GO" id="GO:0010181">
    <property type="term" value="F:FMN binding"/>
    <property type="evidence" value="ECO:0007669"/>
    <property type="project" value="UniProtKB-UniRule"/>
</dbReference>
<dbReference type="GO" id="GO:0004733">
    <property type="term" value="F:pyridoxamine phosphate oxidase activity"/>
    <property type="evidence" value="ECO:0007669"/>
    <property type="project" value="UniProtKB-UniRule"/>
</dbReference>
<dbReference type="GO" id="GO:0008615">
    <property type="term" value="P:pyridoxine biosynthetic process"/>
    <property type="evidence" value="ECO:0007669"/>
    <property type="project" value="UniProtKB-KW"/>
</dbReference>
<dbReference type="FunFam" id="2.30.110.10:FF:000005">
    <property type="entry name" value="NAD(P)H-hydrate epimerase"/>
    <property type="match status" value="1"/>
</dbReference>
<dbReference type="Gene3D" id="2.30.110.10">
    <property type="entry name" value="Electron Transport, Fmn-binding Protein, Chain A"/>
    <property type="match status" value="1"/>
</dbReference>
<dbReference type="HAMAP" id="MF_01629">
    <property type="entry name" value="PdxH"/>
    <property type="match status" value="1"/>
</dbReference>
<dbReference type="InterPro" id="IPR000659">
    <property type="entry name" value="Pyridox_Oxase"/>
</dbReference>
<dbReference type="InterPro" id="IPR019740">
    <property type="entry name" value="Pyridox_Oxase_CS"/>
</dbReference>
<dbReference type="InterPro" id="IPR011576">
    <property type="entry name" value="Pyridox_Oxase_N"/>
</dbReference>
<dbReference type="InterPro" id="IPR019576">
    <property type="entry name" value="Pyridoxamine_oxidase_dimer_C"/>
</dbReference>
<dbReference type="InterPro" id="IPR012349">
    <property type="entry name" value="Split_barrel_FMN-bd"/>
</dbReference>
<dbReference type="NCBIfam" id="TIGR00558">
    <property type="entry name" value="pdxH"/>
    <property type="match status" value="1"/>
</dbReference>
<dbReference type="NCBIfam" id="NF004231">
    <property type="entry name" value="PRK05679.1"/>
    <property type="match status" value="1"/>
</dbReference>
<dbReference type="PANTHER" id="PTHR10851:SF0">
    <property type="entry name" value="PYRIDOXINE-5'-PHOSPHATE OXIDASE"/>
    <property type="match status" value="1"/>
</dbReference>
<dbReference type="PANTHER" id="PTHR10851">
    <property type="entry name" value="PYRIDOXINE-5-PHOSPHATE OXIDASE"/>
    <property type="match status" value="1"/>
</dbReference>
<dbReference type="Pfam" id="PF10590">
    <property type="entry name" value="PNP_phzG_C"/>
    <property type="match status" value="1"/>
</dbReference>
<dbReference type="Pfam" id="PF01243">
    <property type="entry name" value="PNPOx_N"/>
    <property type="match status" value="1"/>
</dbReference>
<dbReference type="PIRSF" id="PIRSF000190">
    <property type="entry name" value="Pyd_amn-ph_oxd"/>
    <property type="match status" value="1"/>
</dbReference>
<dbReference type="SUPFAM" id="SSF50475">
    <property type="entry name" value="FMN-binding split barrel"/>
    <property type="match status" value="1"/>
</dbReference>
<dbReference type="PROSITE" id="PS01064">
    <property type="entry name" value="PYRIDOX_OXIDASE"/>
    <property type="match status" value="1"/>
</dbReference>